<gene>
    <name evidence="1" type="primary">deoB</name>
    <name type="ordered locus">BPUM_2081</name>
</gene>
<organism>
    <name type="scientific">Bacillus pumilus (strain SAFR-032)</name>
    <dbReference type="NCBI Taxonomy" id="315750"/>
    <lineage>
        <taxon>Bacteria</taxon>
        <taxon>Bacillati</taxon>
        <taxon>Bacillota</taxon>
        <taxon>Bacilli</taxon>
        <taxon>Bacillales</taxon>
        <taxon>Bacillaceae</taxon>
        <taxon>Bacillus</taxon>
    </lineage>
</organism>
<accession>A8FET4</accession>
<feature type="chain" id="PRO_1000062147" description="Phosphopentomutase">
    <location>
        <begin position="1"/>
        <end position="394"/>
    </location>
</feature>
<feature type="binding site" evidence="1">
    <location>
        <position position="15"/>
    </location>
    <ligand>
        <name>Mn(2+)</name>
        <dbReference type="ChEBI" id="CHEBI:29035"/>
        <label>1</label>
    </ligand>
</feature>
<feature type="binding site" evidence="1">
    <location>
        <position position="288"/>
    </location>
    <ligand>
        <name>Mn(2+)</name>
        <dbReference type="ChEBI" id="CHEBI:29035"/>
        <label>2</label>
    </ligand>
</feature>
<feature type="binding site" evidence="1">
    <location>
        <position position="293"/>
    </location>
    <ligand>
        <name>Mn(2+)</name>
        <dbReference type="ChEBI" id="CHEBI:29035"/>
        <label>2</label>
    </ligand>
</feature>
<feature type="binding site" evidence="1">
    <location>
        <position position="329"/>
    </location>
    <ligand>
        <name>Mn(2+)</name>
        <dbReference type="ChEBI" id="CHEBI:29035"/>
        <label>1</label>
    </ligand>
</feature>
<feature type="binding site" evidence="1">
    <location>
        <position position="330"/>
    </location>
    <ligand>
        <name>Mn(2+)</name>
        <dbReference type="ChEBI" id="CHEBI:29035"/>
        <label>1</label>
    </ligand>
</feature>
<feature type="binding site" evidence="1">
    <location>
        <position position="341"/>
    </location>
    <ligand>
        <name>Mn(2+)</name>
        <dbReference type="ChEBI" id="CHEBI:29035"/>
        <label>2</label>
    </ligand>
</feature>
<sequence>MPDYQYKRIFLVVMDSVGIGEAPDAAEFNDVGADTLGHIAEKMNGLHMPNMAKLGLSHIKEIKGIPADEKPLAYYGKMQEASNGKDTMTGHWEIMGLYIDTPFRVFPDGFPDELLNELKEKTGRGIIGNKPASGTEILDELGEEHMKTGDLIVYTSADSVLQIAAHEEVVPLDELYRICEIARELTLDEKYMVGRIIARPFVGEPGAFVRTPNRHDYALKPFDRTVMNELKDDGLDVIAIGKISDIYDGEGITSSLRTKSNMDGMDKLVDTLKTDFTGISFLNLVDFDALYGHRRDPEGYGKALEEFDARLPEVFDLLKEDDLLVITADHGNDPVHHGTDHTREYVPLIAYSKKHQGANELPTSKTFADLGATVADNFKTTMPKYGTSFLSKLK</sequence>
<dbReference type="EC" id="5.4.2.7" evidence="1"/>
<dbReference type="EMBL" id="CP000813">
    <property type="protein sequence ID" value="ABV62751.1"/>
    <property type="molecule type" value="Genomic_DNA"/>
</dbReference>
<dbReference type="RefSeq" id="WP_012010451.1">
    <property type="nucleotide sequence ID" value="NC_009848.4"/>
</dbReference>
<dbReference type="SMR" id="A8FET4"/>
<dbReference type="STRING" id="315750.BPUM_2081"/>
<dbReference type="GeneID" id="5621347"/>
<dbReference type="KEGG" id="bpu:BPUM_2081"/>
<dbReference type="eggNOG" id="COG1015">
    <property type="taxonomic scope" value="Bacteria"/>
</dbReference>
<dbReference type="HOGENOM" id="CLU_053861_0_0_9"/>
<dbReference type="OrthoDB" id="9769930at2"/>
<dbReference type="UniPathway" id="UPA00002">
    <property type="reaction ID" value="UER00467"/>
</dbReference>
<dbReference type="Proteomes" id="UP000001355">
    <property type="component" value="Chromosome"/>
</dbReference>
<dbReference type="GO" id="GO:0005829">
    <property type="term" value="C:cytosol"/>
    <property type="evidence" value="ECO:0007669"/>
    <property type="project" value="TreeGrafter"/>
</dbReference>
<dbReference type="GO" id="GO:0000287">
    <property type="term" value="F:magnesium ion binding"/>
    <property type="evidence" value="ECO:0007669"/>
    <property type="project" value="InterPro"/>
</dbReference>
<dbReference type="GO" id="GO:0030145">
    <property type="term" value="F:manganese ion binding"/>
    <property type="evidence" value="ECO:0007669"/>
    <property type="project" value="UniProtKB-UniRule"/>
</dbReference>
<dbReference type="GO" id="GO:0008973">
    <property type="term" value="F:phosphopentomutase activity"/>
    <property type="evidence" value="ECO:0007669"/>
    <property type="project" value="UniProtKB-UniRule"/>
</dbReference>
<dbReference type="GO" id="GO:0006018">
    <property type="term" value="P:2-deoxyribose 1-phosphate catabolic process"/>
    <property type="evidence" value="ECO:0007669"/>
    <property type="project" value="UniProtKB-UniRule"/>
</dbReference>
<dbReference type="GO" id="GO:0006015">
    <property type="term" value="P:5-phosphoribose 1-diphosphate biosynthetic process"/>
    <property type="evidence" value="ECO:0007669"/>
    <property type="project" value="UniProtKB-UniPathway"/>
</dbReference>
<dbReference type="GO" id="GO:0043094">
    <property type="term" value="P:metabolic compound salvage"/>
    <property type="evidence" value="ECO:0007669"/>
    <property type="project" value="InterPro"/>
</dbReference>
<dbReference type="GO" id="GO:0009117">
    <property type="term" value="P:nucleotide metabolic process"/>
    <property type="evidence" value="ECO:0007669"/>
    <property type="project" value="InterPro"/>
</dbReference>
<dbReference type="CDD" id="cd16009">
    <property type="entry name" value="PPM"/>
    <property type="match status" value="1"/>
</dbReference>
<dbReference type="FunFam" id="3.30.70.1250:FF:000001">
    <property type="entry name" value="Phosphopentomutase"/>
    <property type="match status" value="1"/>
</dbReference>
<dbReference type="Gene3D" id="3.40.720.10">
    <property type="entry name" value="Alkaline Phosphatase, subunit A"/>
    <property type="match status" value="1"/>
</dbReference>
<dbReference type="Gene3D" id="3.30.70.1250">
    <property type="entry name" value="Phosphopentomutase"/>
    <property type="match status" value="1"/>
</dbReference>
<dbReference type="HAMAP" id="MF_00740">
    <property type="entry name" value="Phosphopentomut"/>
    <property type="match status" value="1"/>
</dbReference>
<dbReference type="InterPro" id="IPR017850">
    <property type="entry name" value="Alkaline_phosphatase_core_sf"/>
</dbReference>
<dbReference type="InterPro" id="IPR010045">
    <property type="entry name" value="DeoB"/>
</dbReference>
<dbReference type="InterPro" id="IPR006124">
    <property type="entry name" value="Metalloenzyme"/>
</dbReference>
<dbReference type="InterPro" id="IPR024052">
    <property type="entry name" value="Phosphopentomutase_DeoB_cap_sf"/>
</dbReference>
<dbReference type="NCBIfam" id="TIGR01696">
    <property type="entry name" value="deoB"/>
    <property type="match status" value="1"/>
</dbReference>
<dbReference type="NCBIfam" id="NF003766">
    <property type="entry name" value="PRK05362.1"/>
    <property type="match status" value="1"/>
</dbReference>
<dbReference type="PANTHER" id="PTHR21110">
    <property type="entry name" value="PHOSPHOPENTOMUTASE"/>
    <property type="match status" value="1"/>
</dbReference>
<dbReference type="PANTHER" id="PTHR21110:SF0">
    <property type="entry name" value="PHOSPHOPENTOMUTASE"/>
    <property type="match status" value="1"/>
</dbReference>
<dbReference type="Pfam" id="PF01676">
    <property type="entry name" value="Metalloenzyme"/>
    <property type="match status" value="1"/>
</dbReference>
<dbReference type="PIRSF" id="PIRSF001491">
    <property type="entry name" value="Ppentomutase"/>
    <property type="match status" value="1"/>
</dbReference>
<dbReference type="SUPFAM" id="SSF53649">
    <property type="entry name" value="Alkaline phosphatase-like"/>
    <property type="match status" value="1"/>
</dbReference>
<dbReference type="SUPFAM" id="SSF143856">
    <property type="entry name" value="DeoB insert domain-like"/>
    <property type="match status" value="1"/>
</dbReference>
<reference key="1">
    <citation type="journal article" date="2007" name="PLoS ONE">
        <title>Paradoxical DNA repair and peroxide resistance gene conservation in Bacillus pumilus SAFR-032.</title>
        <authorList>
            <person name="Gioia J."/>
            <person name="Yerrapragada S."/>
            <person name="Qin X."/>
            <person name="Jiang H."/>
            <person name="Igboeli O.C."/>
            <person name="Muzny D."/>
            <person name="Dugan-Rocha S."/>
            <person name="Ding Y."/>
            <person name="Hawes A."/>
            <person name="Liu W."/>
            <person name="Perez L."/>
            <person name="Kovar C."/>
            <person name="Dinh H."/>
            <person name="Lee S."/>
            <person name="Nazareth L."/>
            <person name="Blyth P."/>
            <person name="Holder M."/>
            <person name="Buhay C."/>
            <person name="Tirumalai M.R."/>
            <person name="Liu Y."/>
            <person name="Dasgupta I."/>
            <person name="Bokhetache L."/>
            <person name="Fujita M."/>
            <person name="Karouia F."/>
            <person name="Eswara Moorthy P."/>
            <person name="Siefert J."/>
            <person name="Uzman A."/>
            <person name="Buzumbo P."/>
            <person name="Verma A."/>
            <person name="Zwiya H."/>
            <person name="McWilliams B.D."/>
            <person name="Olowu A."/>
            <person name="Clinkenbeard K.D."/>
            <person name="Newcombe D."/>
            <person name="Golebiewski L."/>
            <person name="Petrosino J.F."/>
            <person name="Nicholson W.L."/>
            <person name="Fox G.E."/>
            <person name="Venkateswaran K."/>
            <person name="Highlander S.K."/>
            <person name="Weinstock G.M."/>
        </authorList>
    </citation>
    <scope>NUCLEOTIDE SEQUENCE [LARGE SCALE GENOMIC DNA]</scope>
    <source>
        <strain>SAFR-032</strain>
    </source>
</reference>
<keyword id="KW-0963">Cytoplasm</keyword>
<keyword id="KW-0413">Isomerase</keyword>
<keyword id="KW-0464">Manganese</keyword>
<keyword id="KW-0479">Metal-binding</keyword>
<protein>
    <recommendedName>
        <fullName evidence="1">Phosphopentomutase</fullName>
        <ecNumber evidence="1">5.4.2.7</ecNumber>
    </recommendedName>
    <alternativeName>
        <fullName evidence="1">Phosphodeoxyribomutase</fullName>
    </alternativeName>
</protein>
<proteinExistence type="inferred from homology"/>
<evidence type="ECO:0000255" key="1">
    <source>
        <dbReference type="HAMAP-Rule" id="MF_00740"/>
    </source>
</evidence>
<comment type="function">
    <text evidence="1">Isomerase that catalyzes the conversion of deoxy-ribose 1-phosphate (dRib-1-P) and ribose 1-phosphate (Rib-1-P) to deoxy-ribose 5-phosphate (dRib-5-P) and ribose 5-phosphate (Rib-5-P), respectively.</text>
</comment>
<comment type="catalytic activity">
    <reaction evidence="1">
        <text>2-deoxy-alpha-D-ribose 1-phosphate = 2-deoxy-D-ribose 5-phosphate</text>
        <dbReference type="Rhea" id="RHEA:27658"/>
        <dbReference type="ChEBI" id="CHEBI:57259"/>
        <dbReference type="ChEBI" id="CHEBI:62877"/>
        <dbReference type="EC" id="5.4.2.7"/>
    </reaction>
</comment>
<comment type="catalytic activity">
    <reaction evidence="1">
        <text>alpha-D-ribose 1-phosphate = D-ribose 5-phosphate</text>
        <dbReference type="Rhea" id="RHEA:18793"/>
        <dbReference type="ChEBI" id="CHEBI:57720"/>
        <dbReference type="ChEBI" id="CHEBI:78346"/>
        <dbReference type="EC" id="5.4.2.7"/>
    </reaction>
</comment>
<comment type="cofactor">
    <cofactor evidence="1">
        <name>Mn(2+)</name>
        <dbReference type="ChEBI" id="CHEBI:29035"/>
    </cofactor>
    <text evidence="1">Binds 2 manganese ions.</text>
</comment>
<comment type="pathway">
    <text evidence="1">Carbohydrate degradation; 2-deoxy-D-ribose 1-phosphate degradation; D-glyceraldehyde 3-phosphate and acetaldehyde from 2-deoxy-alpha-D-ribose 1-phosphate: step 1/2.</text>
</comment>
<comment type="subcellular location">
    <subcellularLocation>
        <location evidence="1">Cytoplasm</location>
    </subcellularLocation>
</comment>
<comment type="similarity">
    <text evidence="1">Belongs to the phosphopentomutase family.</text>
</comment>
<name>DEOB_BACP2</name>